<keyword id="KW-0939">Gibberellin signaling pathway</keyword>
<keyword id="KW-0539">Nucleus</keyword>
<keyword id="KW-1185">Reference proteome</keyword>
<keyword id="KW-0804">Transcription</keyword>
<keyword id="KW-0805">Transcription regulation</keyword>
<organism>
    <name type="scientific">Oryza sativa subsp. indica</name>
    <name type="common">Rice</name>
    <dbReference type="NCBI Taxonomy" id="39946"/>
    <lineage>
        <taxon>Eukaryota</taxon>
        <taxon>Viridiplantae</taxon>
        <taxon>Streptophyta</taxon>
        <taxon>Embryophyta</taxon>
        <taxon>Tracheophyta</taxon>
        <taxon>Spermatophyta</taxon>
        <taxon>Magnoliopsida</taxon>
        <taxon>Liliopsida</taxon>
        <taxon>Poales</taxon>
        <taxon>Poaceae</taxon>
        <taxon>BOP clade</taxon>
        <taxon>Oryzoideae</taxon>
        <taxon>Oryzeae</taxon>
        <taxon>Oryzinae</taxon>
        <taxon>Oryza</taxon>
        <taxon>Oryza sativa</taxon>
    </lineage>
</organism>
<accession>A2YXI4</accession>
<gene>
    <name evidence="1" type="primary">BCL1</name>
    <name evidence="1" type="synonym">bHLH080</name>
    <name evidence="6" type="ORF">OsI_30053</name>
</gene>
<evidence type="ECO:0000250" key="1">
    <source>
        <dbReference type="UniProtKB" id="A3BV95"/>
    </source>
</evidence>
<evidence type="ECO:0000255" key="2">
    <source>
        <dbReference type="PROSITE-ProRule" id="PRU00768"/>
    </source>
</evidence>
<evidence type="ECO:0000255" key="3">
    <source>
        <dbReference type="PROSITE-ProRule" id="PRU00981"/>
    </source>
</evidence>
<evidence type="ECO:0000256" key="4">
    <source>
        <dbReference type="SAM" id="MobiDB-lite"/>
    </source>
</evidence>
<evidence type="ECO:0000305" key="5"/>
<evidence type="ECO:0000312" key="6">
    <source>
        <dbReference type="EMBL" id="EAZ07795.1"/>
    </source>
</evidence>
<dbReference type="EMBL" id="CM000133">
    <property type="protein sequence ID" value="EAZ07795.1"/>
    <property type="molecule type" value="Genomic_DNA"/>
</dbReference>
<dbReference type="SMR" id="A2YXI4"/>
<dbReference type="STRING" id="39946.A2YXI4"/>
<dbReference type="EnsemblPlants" id="BGIOSGA026577-TA">
    <property type="protein sequence ID" value="BGIOSGA026577-PA"/>
    <property type="gene ID" value="BGIOSGA026577"/>
</dbReference>
<dbReference type="EnsemblPlants" id="OsGoSa_08g0022730.01">
    <property type="protein sequence ID" value="OsGoSa_08g0022730.01"/>
    <property type="gene ID" value="OsGoSa_08g0022730"/>
</dbReference>
<dbReference type="EnsemblPlants" id="OsIR64_08g0023220.01">
    <property type="protein sequence ID" value="OsIR64_08g0023220.01"/>
    <property type="gene ID" value="OsIR64_08g0023220"/>
</dbReference>
<dbReference type="EnsemblPlants" id="OsKYG_08g0022910.01">
    <property type="protein sequence ID" value="OsKYG_08g0022910.01"/>
    <property type="gene ID" value="OsKYG_08g0022910"/>
</dbReference>
<dbReference type="EnsemblPlants" id="OsLaMu_08g0022890.01">
    <property type="protein sequence ID" value="OsLaMu_08g0022890.01"/>
    <property type="gene ID" value="OsLaMu_08g0022890"/>
</dbReference>
<dbReference type="EnsemblPlants" id="OsLima_08g0022600.01">
    <property type="protein sequence ID" value="OsLima_08g0022600.01"/>
    <property type="gene ID" value="OsLima_08g0022600"/>
</dbReference>
<dbReference type="EnsemblPlants" id="OsLiXu_08g0023560.01">
    <property type="protein sequence ID" value="OsLiXu_08g0023560.01"/>
    <property type="gene ID" value="OsLiXu_08g0023560"/>
</dbReference>
<dbReference type="EnsemblPlants" id="OsLiXu_Ung0047340.01">
    <property type="protein sequence ID" value="OsLiXu_Ung0047340.01"/>
    <property type="gene ID" value="OsLiXu_Ung0047340"/>
</dbReference>
<dbReference type="EnsemblPlants" id="OsZS97_08G023290_02">
    <property type="protein sequence ID" value="OsZS97_08G023290_02"/>
    <property type="gene ID" value="OsZS97_08G023290"/>
</dbReference>
<dbReference type="Gramene" id="BGIOSGA026577-TA">
    <property type="protein sequence ID" value="BGIOSGA026577-PA"/>
    <property type="gene ID" value="BGIOSGA026577"/>
</dbReference>
<dbReference type="Gramene" id="OsGoSa_08g0022730.01">
    <property type="protein sequence ID" value="OsGoSa_08g0022730.01"/>
    <property type="gene ID" value="OsGoSa_08g0022730"/>
</dbReference>
<dbReference type="Gramene" id="OsIR64_08g0023220.01">
    <property type="protein sequence ID" value="OsIR64_08g0023220.01"/>
    <property type="gene ID" value="OsIR64_08g0023220"/>
</dbReference>
<dbReference type="Gramene" id="OsKYG_08g0022910.01">
    <property type="protein sequence ID" value="OsKYG_08g0022910.01"/>
    <property type="gene ID" value="OsKYG_08g0022910"/>
</dbReference>
<dbReference type="Gramene" id="OsLaMu_08g0022890.01">
    <property type="protein sequence ID" value="OsLaMu_08g0022890.01"/>
    <property type="gene ID" value="OsLaMu_08g0022890"/>
</dbReference>
<dbReference type="Gramene" id="OsLima_08g0022600.01">
    <property type="protein sequence ID" value="OsLima_08g0022600.01"/>
    <property type="gene ID" value="OsLima_08g0022600"/>
</dbReference>
<dbReference type="Gramene" id="OsLiXu_08g0023560.01">
    <property type="protein sequence ID" value="OsLiXu_08g0023560.01"/>
    <property type="gene ID" value="OsLiXu_08g0023560"/>
</dbReference>
<dbReference type="Gramene" id="OsLiXu_Ung0047340.01">
    <property type="protein sequence ID" value="OsLiXu_Ung0047340.01"/>
    <property type="gene ID" value="OsLiXu_Ung0047340"/>
</dbReference>
<dbReference type="Gramene" id="OsZS97_08G023290_02">
    <property type="protein sequence ID" value="OsZS97_08G023290_02"/>
    <property type="gene ID" value="OsZS97_08G023290"/>
</dbReference>
<dbReference type="HOGENOM" id="CLU_061056_1_0_1"/>
<dbReference type="OMA" id="NGSTYLM"/>
<dbReference type="OrthoDB" id="1928604at2759"/>
<dbReference type="Proteomes" id="UP000007015">
    <property type="component" value="Chromosome 8"/>
</dbReference>
<dbReference type="GO" id="GO:0005634">
    <property type="term" value="C:nucleus"/>
    <property type="evidence" value="ECO:0007669"/>
    <property type="project" value="UniProtKB-SubCell"/>
</dbReference>
<dbReference type="GO" id="GO:0003700">
    <property type="term" value="F:DNA-binding transcription factor activity"/>
    <property type="evidence" value="ECO:0007669"/>
    <property type="project" value="TreeGrafter"/>
</dbReference>
<dbReference type="GO" id="GO:0046983">
    <property type="term" value="F:protein dimerization activity"/>
    <property type="evidence" value="ECO:0007669"/>
    <property type="project" value="InterPro"/>
</dbReference>
<dbReference type="GO" id="GO:0009740">
    <property type="term" value="P:gibberellic acid mediated signaling pathway"/>
    <property type="evidence" value="ECO:0007669"/>
    <property type="project" value="UniProtKB-KW"/>
</dbReference>
<dbReference type="CDD" id="cd18919">
    <property type="entry name" value="bHLH_AtBPE_like"/>
    <property type="match status" value="1"/>
</dbReference>
<dbReference type="FunFam" id="4.10.280.10:FF:000002">
    <property type="entry name" value="Basic helix-loop-helix transcription factor"/>
    <property type="match status" value="1"/>
</dbReference>
<dbReference type="Gene3D" id="4.10.280.10">
    <property type="entry name" value="Helix-loop-helix DNA-binding domain"/>
    <property type="match status" value="1"/>
</dbReference>
<dbReference type="InterPro" id="IPR011598">
    <property type="entry name" value="bHLH_dom"/>
</dbReference>
<dbReference type="InterPro" id="IPR024097">
    <property type="entry name" value="bHLH_ZIP_TF"/>
</dbReference>
<dbReference type="InterPro" id="IPR036638">
    <property type="entry name" value="HLH_DNA-bd_sf"/>
</dbReference>
<dbReference type="PANTHER" id="PTHR12565:SF468">
    <property type="entry name" value="BASIC HELIX-LOOP-HELIX PROTEIN 80"/>
    <property type="match status" value="1"/>
</dbReference>
<dbReference type="PANTHER" id="PTHR12565">
    <property type="entry name" value="STEROL REGULATORY ELEMENT-BINDING PROTEIN"/>
    <property type="match status" value="1"/>
</dbReference>
<dbReference type="Pfam" id="PF00010">
    <property type="entry name" value="HLH"/>
    <property type="match status" value="1"/>
</dbReference>
<dbReference type="SMART" id="SM00353">
    <property type="entry name" value="HLH"/>
    <property type="match status" value="1"/>
</dbReference>
<dbReference type="SUPFAM" id="SSF47459">
    <property type="entry name" value="HLH, helix-loop-helix DNA-binding domain"/>
    <property type="match status" value="1"/>
</dbReference>
<dbReference type="PROSITE" id="PS50888">
    <property type="entry name" value="BHLH"/>
    <property type="match status" value="1"/>
</dbReference>
<comment type="function">
    <text evidence="1">Together with BCL2, positive regulator of cell elongation at least partially through increased gibberellic acid (GA) biosynthesis.</text>
</comment>
<comment type="subunit">
    <text evidence="1 5">Homodimer (Probable). Interacts with IBH1, BC1 and LO9-177 (By similarity).</text>
</comment>
<comment type="subcellular location">
    <subcellularLocation>
        <location evidence="2 3">Nucleus</location>
    </subcellularLocation>
</comment>
<comment type="similarity">
    <text evidence="5">Belongs to the bHLH protein family.</text>
</comment>
<name>BCL1_ORYSI</name>
<sequence length="291" mass="31606">MADFSPHHSLLLKATAAGAAIATTNDPNISSFFLYNHSHGSQAPQPANAAAAAIVEDASLESSVSAVLDTSPSVDRKRKAAEDSAHSKDSCKDGKSRRGKKASKEVEEKSTTEDEPPKGYIHVRARRGQATDSHSLAERVRRERISERMRMLQALVPGCDKVTGKALILDEIINYVQSLQNQVEFLSMRIASMSPVLYGFGMDSDGLHDQKIGGMFQEALAMPNPVLNQSSPAPSQAIMDTTSTTSYSLQSQHGAISFSQDNGSYLMQAVGEPRQQEMLNQLVFNNMCSFQ</sequence>
<reference key="1">
    <citation type="journal article" date="2005" name="PLoS Biol.">
        <title>The genomes of Oryza sativa: a history of duplications.</title>
        <authorList>
            <person name="Yu J."/>
            <person name="Wang J."/>
            <person name="Lin W."/>
            <person name="Li S."/>
            <person name="Li H."/>
            <person name="Zhou J."/>
            <person name="Ni P."/>
            <person name="Dong W."/>
            <person name="Hu S."/>
            <person name="Zeng C."/>
            <person name="Zhang J."/>
            <person name="Zhang Y."/>
            <person name="Li R."/>
            <person name="Xu Z."/>
            <person name="Li S."/>
            <person name="Li X."/>
            <person name="Zheng H."/>
            <person name="Cong L."/>
            <person name="Lin L."/>
            <person name="Yin J."/>
            <person name="Geng J."/>
            <person name="Li G."/>
            <person name="Shi J."/>
            <person name="Liu J."/>
            <person name="Lv H."/>
            <person name="Li J."/>
            <person name="Wang J."/>
            <person name="Deng Y."/>
            <person name="Ran L."/>
            <person name="Shi X."/>
            <person name="Wang X."/>
            <person name="Wu Q."/>
            <person name="Li C."/>
            <person name="Ren X."/>
            <person name="Wang J."/>
            <person name="Wang X."/>
            <person name="Li D."/>
            <person name="Liu D."/>
            <person name="Zhang X."/>
            <person name="Ji Z."/>
            <person name="Zhao W."/>
            <person name="Sun Y."/>
            <person name="Zhang Z."/>
            <person name="Bao J."/>
            <person name="Han Y."/>
            <person name="Dong L."/>
            <person name="Ji J."/>
            <person name="Chen P."/>
            <person name="Wu S."/>
            <person name="Liu J."/>
            <person name="Xiao Y."/>
            <person name="Bu D."/>
            <person name="Tan J."/>
            <person name="Yang L."/>
            <person name="Ye C."/>
            <person name="Zhang J."/>
            <person name="Xu J."/>
            <person name="Zhou Y."/>
            <person name="Yu Y."/>
            <person name="Zhang B."/>
            <person name="Zhuang S."/>
            <person name="Wei H."/>
            <person name="Liu B."/>
            <person name="Lei M."/>
            <person name="Yu H."/>
            <person name="Li Y."/>
            <person name="Xu H."/>
            <person name="Wei S."/>
            <person name="He X."/>
            <person name="Fang L."/>
            <person name="Zhang Z."/>
            <person name="Zhang Y."/>
            <person name="Huang X."/>
            <person name="Su Z."/>
            <person name="Tong W."/>
            <person name="Li J."/>
            <person name="Tong Z."/>
            <person name="Li S."/>
            <person name="Ye J."/>
            <person name="Wang L."/>
            <person name="Fang L."/>
            <person name="Lei T."/>
            <person name="Chen C.-S."/>
            <person name="Chen H.-C."/>
            <person name="Xu Z."/>
            <person name="Li H."/>
            <person name="Huang H."/>
            <person name="Zhang F."/>
            <person name="Xu H."/>
            <person name="Li N."/>
            <person name="Zhao C."/>
            <person name="Li S."/>
            <person name="Dong L."/>
            <person name="Huang Y."/>
            <person name="Li L."/>
            <person name="Xi Y."/>
            <person name="Qi Q."/>
            <person name="Li W."/>
            <person name="Zhang B."/>
            <person name="Hu W."/>
            <person name="Zhang Y."/>
            <person name="Tian X."/>
            <person name="Jiao Y."/>
            <person name="Liang X."/>
            <person name="Jin J."/>
            <person name="Gao L."/>
            <person name="Zheng W."/>
            <person name="Hao B."/>
            <person name="Liu S.-M."/>
            <person name="Wang W."/>
            <person name="Yuan L."/>
            <person name="Cao M."/>
            <person name="McDermott J."/>
            <person name="Samudrala R."/>
            <person name="Wang J."/>
            <person name="Wong G.K.-S."/>
            <person name="Yang H."/>
        </authorList>
    </citation>
    <scope>NUCLEOTIDE SEQUENCE [LARGE SCALE GENOMIC DNA]</scope>
    <source>
        <strain>cv. 93-11</strain>
    </source>
</reference>
<feature type="chain" id="PRO_0000456870" description="Basic helix-loop-helix protein 80">
    <location>
        <begin position="1"/>
        <end position="291"/>
    </location>
</feature>
<feature type="domain" description="bHLH" evidence="3">
    <location>
        <begin position="129"/>
        <end position="179"/>
    </location>
</feature>
<feature type="region of interest" description="Disordered" evidence="4">
    <location>
        <begin position="65"/>
        <end position="120"/>
    </location>
</feature>
<feature type="region of interest" description="Basic motif; degenerate" evidence="3">
    <location>
        <begin position="129"/>
        <end position="142"/>
    </location>
</feature>
<feature type="region of interest" description="Helix-loop-helix motif" evidence="3">
    <location>
        <begin position="143"/>
        <end position="179"/>
    </location>
</feature>
<feature type="short sequence motif" description="Nuclear localization signal" evidence="2">
    <location>
        <begin position="125"/>
        <end position="132"/>
    </location>
</feature>
<feature type="compositionally biased region" description="Basic and acidic residues" evidence="4">
    <location>
        <begin position="80"/>
        <end position="117"/>
    </location>
</feature>
<protein>
    <recommendedName>
        <fullName evidence="1">Basic helix-loop-helix protein 80</fullName>
        <shortName evidence="1">OsbHLH080</shortName>
    </recommendedName>
    <alternativeName>
        <fullName evidence="1">Protein BC-like 1</fullName>
        <shortName evidence="1">OsBC1-like1</shortName>
        <shortName evidence="1">OsBCL1</shortName>
    </alternativeName>
</protein>
<proteinExistence type="inferred from homology"/>